<evidence type="ECO:0000250" key="1">
    <source>
        <dbReference type="UniProtKB" id="P95649"/>
    </source>
</evidence>
<evidence type="ECO:0000255" key="2"/>
<evidence type="ECO:0000269" key="3">
    <source>
    </source>
</evidence>
<evidence type="ECO:0000303" key="4">
    <source>
    </source>
</evidence>
<evidence type="ECO:0000305" key="5"/>
<evidence type="ECO:0000305" key="6">
    <source>
    </source>
</evidence>
<evidence type="ECO:0000312" key="7">
    <source>
        <dbReference type="Araport" id="AT3G48420"/>
    </source>
</evidence>
<evidence type="ECO:0000312" key="8">
    <source>
        <dbReference type="EMBL" id="CAB41156.1"/>
    </source>
</evidence>
<evidence type="ECO:0007744" key="9">
    <source>
        <dbReference type="PDB" id="4UAV"/>
    </source>
</evidence>
<evidence type="ECO:0007829" key="10">
    <source>
        <dbReference type="PDB" id="4UAV"/>
    </source>
</evidence>
<accession>Q94K71</accession>
<accession>Q67ZZ0</accession>
<accession>Q8LCE8</accession>
<accession>Q9STM2</accession>
<comment type="function">
    <text evidence="3">Highly selective xylulose-1,5-bisphosphate (XuBP) phosphatase. Also shows activity towards ribulose-1,5-bisphosphate (RuBP) and fructose-1,6-bisphosphate (FBP), but not towards fructose-6-phosphate (F6P) or ribulose-5-phosphate (Ru5P) (PubMed:27246049). Degrades xylulose-1,5-bisphosphate, a potent inhibitor of rubisco produced by the rubisco itself (PubMed:27246049).</text>
</comment>
<comment type="catalytic activity">
    <reaction evidence="3">
        <text>D-xylulose 1,5-bisphosphate + H2O = D-xylulose 5-phosphate + phosphate</text>
        <dbReference type="Rhea" id="RHEA:54548"/>
        <dbReference type="ChEBI" id="CHEBI:15377"/>
        <dbReference type="ChEBI" id="CHEBI:43474"/>
        <dbReference type="ChEBI" id="CHEBI:57737"/>
        <dbReference type="ChEBI" id="CHEBI:138268"/>
    </reaction>
</comment>
<comment type="cofactor">
    <cofactor evidence="3">
        <name>Mg(2+)</name>
        <dbReference type="ChEBI" id="CHEBI:18420"/>
    </cofactor>
</comment>
<comment type="biophysicochemical properties">
    <kinetics>
        <KM evidence="3">0.033 mM for xylulose-1,5-bisphosphate</KM>
        <KM evidence="3">3.06 mM for ribulose-1,5-bisphosphate</KM>
        <KM evidence="3">6.2 mM for fructose-1,6-bisphosphate</KM>
        <text evidence="3">kcat is 2.45 sec(-1) with xylulose-1,5-bisphosphate as substrate. kcat is 0.049 sec(-1) with ribulose-1,5-bisphosphate as substrate.</text>
    </kinetics>
</comment>
<comment type="subcellular location">
    <subcellularLocation>
        <location evidence="5">Plastid</location>
        <location evidence="5">Chloroplast</location>
    </subcellularLocation>
</comment>
<comment type="similarity">
    <text evidence="5">Belongs to the HAD-like hydrolase superfamily. DOG/GPP family.</text>
</comment>
<comment type="sequence caution" evidence="5">
    <conflict type="erroneous gene model prediction">
        <sequence resource="EMBL-CDS" id="CAB41156"/>
    </conflict>
    <text>The predicted gene has been split into 2 genes: At3g48420 and At3g48425.</text>
</comment>
<keyword id="KW-0002">3D-structure</keyword>
<keyword id="KW-0150">Chloroplast</keyword>
<keyword id="KW-0378">Hydrolase</keyword>
<keyword id="KW-0460">Magnesium</keyword>
<keyword id="KW-0479">Metal-binding</keyword>
<keyword id="KW-0934">Plastid</keyword>
<keyword id="KW-1185">Reference proteome</keyword>
<keyword id="KW-0809">Transit peptide</keyword>
<feature type="transit peptide" description="Chloroplast" evidence="2">
    <location>
        <begin position="1"/>
        <end position="65"/>
    </location>
</feature>
<feature type="chain" id="PRO_0000424321" description="CBBY-like protein">
    <location>
        <begin position="66"/>
        <end position="319"/>
    </location>
</feature>
<feature type="active site" description="Nucleophile" evidence="6">
    <location>
        <position position="82"/>
    </location>
</feature>
<feature type="active site" description="Proton donor" evidence="6">
    <location>
        <position position="84"/>
    </location>
</feature>
<feature type="binding site" evidence="9">
    <location>
        <position position="82"/>
    </location>
    <ligand>
        <name>Mg(2+)</name>
        <dbReference type="ChEBI" id="CHEBI:18420"/>
    </ligand>
</feature>
<feature type="binding site" evidence="1">
    <location>
        <position position="82"/>
    </location>
    <ligand>
        <name>substrate</name>
    </ligand>
</feature>
<feature type="binding site" evidence="9">
    <location>
        <position position="84"/>
    </location>
    <ligand>
        <name>Mg(2+)</name>
        <dbReference type="ChEBI" id="CHEBI:18420"/>
    </ligand>
</feature>
<feature type="binding site" evidence="1">
    <location>
        <position position="91"/>
    </location>
    <ligand>
        <name>substrate</name>
    </ligand>
</feature>
<feature type="binding site" evidence="1">
    <location>
        <begin position="125"/>
        <end position="129"/>
    </location>
    <ligand>
        <name>substrate</name>
    </ligand>
</feature>
<feature type="binding site" evidence="1">
    <location>
        <begin position="158"/>
        <end position="161"/>
    </location>
    <ligand>
        <name>substrate</name>
    </ligand>
</feature>
<feature type="binding site" evidence="1">
    <location>
        <begin position="198"/>
        <end position="204"/>
    </location>
    <ligand>
        <name>substrate</name>
    </ligand>
</feature>
<feature type="binding site" evidence="9">
    <location>
        <position position="258"/>
    </location>
    <ligand>
        <name>Mg(2+)</name>
        <dbReference type="ChEBI" id="CHEBI:18420"/>
    </ligand>
</feature>
<feature type="mutagenesis site" description="Loss of catalytic activity." evidence="3">
    <original>D</original>
    <variation>N</variation>
    <location>
        <position position="84"/>
    </location>
</feature>
<feature type="mutagenesis site" description="40% to 80% decreased catalytic activity with xylulose-1,5-bisphosphate, but no effect on activity with ribulose-1,5-bisphosphate." evidence="3">
    <original>E</original>
    <variation>A</variation>
    <location>
        <position position="91"/>
    </location>
</feature>
<feature type="mutagenesis site" description="40% to 80% decreased catalytic activity with xylulose-1,5-bisphosphate, but no effect on activity with ribulose-1,5-bisphosphate." evidence="3">
    <original>H</original>
    <variation>A</variation>
    <location>
        <position position="95"/>
    </location>
</feature>
<feature type="mutagenesis site" description="40% to 80% decreased catalytic activity with xylulose-1,5-bisphosphate, but no effect on activity with ribulose-1,5-bisphosphate." evidence="3">
    <original>Y</original>
    <variation>A</variation>
    <location>
        <position position="117"/>
    </location>
</feature>
<feature type="mutagenesis site" description="97% decreased catalytic activity with xylulose-1,5-bisphosphate, but no effect on activity with ribulose-1,5-bisphosphate." evidence="3">
    <original>R</original>
    <variation>A</variation>
    <location>
        <position position="129"/>
    </location>
</feature>
<feature type="mutagenesis site" description="40% to 80% decreased catalytic activity with xylulose-1,5-bisphosphate, but no effect on activity with ribulose-1,5-bisphosphate." evidence="3">
    <original>K</original>
    <variation>A</variation>
    <location>
        <position position="161"/>
    </location>
</feature>
<feature type="sequence conflict" description="In Ref. 5; BAD43740." evidence="5" ref="5">
    <original>R</original>
    <variation>G</variation>
    <location>
        <position position="106"/>
    </location>
</feature>
<feature type="sequence conflict" description="In Ref. 6; AAM63700." evidence="5" ref="6">
    <original>R</original>
    <variation>Q</variation>
    <location>
        <position position="314"/>
    </location>
</feature>
<feature type="strand" evidence="10">
    <location>
        <begin position="77"/>
        <end position="81"/>
    </location>
</feature>
<feature type="turn" evidence="10">
    <location>
        <begin position="84"/>
        <end position="86"/>
    </location>
</feature>
<feature type="helix" evidence="10">
    <location>
        <begin position="90"/>
        <end position="93"/>
    </location>
</feature>
<feature type="helix" evidence="10">
    <location>
        <begin position="95"/>
        <end position="105"/>
    </location>
</feature>
<feature type="helix" evidence="10">
    <location>
        <begin position="114"/>
        <end position="120"/>
    </location>
</feature>
<feature type="turn" evidence="10">
    <location>
        <begin position="121"/>
        <end position="123"/>
    </location>
</feature>
<feature type="helix" evidence="10">
    <location>
        <begin position="126"/>
        <end position="137"/>
    </location>
</feature>
<feature type="helix" evidence="10">
    <location>
        <begin position="147"/>
        <end position="170"/>
    </location>
</feature>
<feature type="helix" evidence="10">
    <location>
        <begin position="180"/>
        <end position="189"/>
    </location>
</feature>
<feature type="strand" evidence="10">
    <location>
        <begin position="193"/>
        <end position="197"/>
    </location>
</feature>
<feature type="helix" evidence="10">
    <location>
        <begin position="202"/>
        <end position="212"/>
    </location>
</feature>
<feature type="helix" evidence="10">
    <location>
        <begin position="215"/>
        <end position="218"/>
    </location>
</feature>
<feature type="strand" evidence="10">
    <location>
        <begin position="221"/>
        <end position="224"/>
    </location>
</feature>
<feature type="helix" evidence="10">
    <location>
        <begin position="226"/>
        <end position="228"/>
    </location>
</feature>
<feature type="strand" evidence="10">
    <location>
        <begin position="229"/>
        <end position="231"/>
    </location>
</feature>
<feature type="helix" evidence="10">
    <location>
        <begin position="237"/>
        <end position="246"/>
    </location>
</feature>
<feature type="helix" evidence="10">
    <location>
        <begin position="250"/>
        <end position="252"/>
    </location>
</feature>
<feature type="strand" evidence="10">
    <location>
        <begin position="253"/>
        <end position="257"/>
    </location>
</feature>
<feature type="helix" evidence="10">
    <location>
        <begin position="260"/>
        <end position="268"/>
    </location>
</feature>
<feature type="strand" evidence="10">
    <location>
        <begin position="272"/>
        <end position="276"/>
    </location>
</feature>
<feature type="turn" evidence="10">
    <location>
        <begin position="279"/>
        <end position="283"/>
    </location>
</feature>
<feature type="strand" evidence="10">
    <location>
        <begin position="290"/>
        <end position="294"/>
    </location>
</feature>
<feature type="helix" evidence="10">
    <location>
        <begin position="306"/>
        <end position="312"/>
    </location>
</feature>
<organism>
    <name type="scientific">Arabidopsis thaliana</name>
    <name type="common">Mouse-ear cress</name>
    <dbReference type="NCBI Taxonomy" id="3702"/>
    <lineage>
        <taxon>Eukaryota</taxon>
        <taxon>Viridiplantae</taxon>
        <taxon>Streptophyta</taxon>
        <taxon>Embryophyta</taxon>
        <taxon>Tracheophyta</taxon>
        <taxon>Spermatophyta</taxon>
        <taxon>Magnoliopsida</taxon>
        <taxon>eudicotyledons</taxon>
        <taxon>Gunneridae</taxon>
        <taxon>Pentapetalae</taxon>
        <taxon>rosids</taxon>
        <taxon>malvids</taxon>
        <taxon>Brassicales</taxon>
        <taxon>Brassicaceae</taxon>
        <taxon>Camelineae</taxon>
        <taxon>Arabidopsis</taxon>
    </lineage>
</organism>
<dbReference type="EC" id="3.1.3.-" evidence="3"/>
<dbReference type="EMBL" id="AL049659">
    <property type="protein sequence ID" value="CAB41156.1"/>
    <property type="status" value="ALT_SEQ"/>
    <property type="molecule type" value="Genomic_DNA"/>
</dbReference>
<dbReference type="EMBL" id="CP002686">
    <property type="protein sequence ID" value="AEE78414.1"/>
    <property type="molecule type" value="Genomic_DNA"/>
</dbReference>
<dbReference type="EMBL" id="AF370250">
    <property type="protein sequence ID" value="AAK44065.1"/>
    <property type="molecule type" value="mRNA"/>
</dbReference>
<dbReference type="EMBL" id="AY063066">
    <property type="protein sequence ID" value="AAL34240.1"/>
    <property type="molecule type" value="mRNA"/>
</dbReference>
<dbReference type="EMBL" id="AK118118">
    <property type="protein sequence ID" value="BAC42744.1"/>
    <property type="molecule type" value="mRNA"/>
</dbReference>
<dbReference type="EMBL" id="AK175866">
    <property type="protein sequence ID" value="BAD43629.1"/>
    <property type="molecule type" value="mRNA"/>
</dbReference>
<dbReference type="EMBL" id="AK175977">
    <property type="protein sequence ID" value="BAD43740.1"/>
    <property type="molecule type" value="mRNA"/>
</dbReference>
<dbReference type="EMBL" id="AK176795">
    <property type="protein sequence ID" value="BAD44558.1"/>
    <property type="molecule type" value="mRNA"/>
</dbReference>
<dbReference type="EMBL" id="AY086642">
    <property type="protein sequence ID" value="AAM63700.1"/>
    <property type="molecule type" value="mRNA"/>
</dbReference>
<dbReference type="PIR" id="T06700">
    <property type="entry name" value="T06700"/>
</dbReference>
<dbReference type="RefSeq" id="NP_566903.1">
    <property type="nucleotide sequence ID" value="NM_114701.3"/>
</dbReference>
<dbReference type="PDB" id="4UAV">
    <property type="method" value="X-ray"/>
    <property type="resolution" value="1.30 A"/>
    <property type="chains" value="A=74-319"/>
</dbReference>
<dbReference type="PDBsum" id="4UAV"/>
<dbReference type="SMR" id="Q94K71"/>
<dbReference type="FunCoup" id="Q94K71">
    <property type="interactions" value="863"/>
</dbReference>
<dbReference type="STRING" id="3702.Q94K71"/>
<dbReference type="MetOSite" id="Q94K71"/>
<dbReference type="PaxDb" id="3702-AT3G48420.1"/>
<dbReference type="ProteomicsDB" id="223926"/>
<dbReference type="EnsemblPlants" id="AT3G48420.1">
    <property type="protein sequence ID" value="AT3G48420.1"/>
    <property type="gene ID" value="AT3G48420"/>
</dbReference>
<dbReference type="GeneID" id="824000"/>
<dbReference type="Gramene" id="AT3G48420.1">
    <property type="protein sequence ID" value="AT3G48420.1"/>
    <property type="gene ID" value="AT3G48420"/>
</dbReference>
<dbReference type="KEGG" id="ath:AT3G48420"/>
<dbReference type="Araport" id="AT3G48420"/>
<dbReference type="TAIR" id="AT3G48420"/>
<dbReference type="eggNOG" id="KOG2914">
    <property type="taxonomic scope" value="Eukaryota"/>
</dbReference>
<dbReference type="HOGENOM" id="CLU_045011_0_0_1"/>
<dbReference type="InParanoid" id="Q94K71"/>
<dbReference type="OMA" id="RFDLTFC"/>
<dbReference type="PhylomeDB" id="Q94K71"/>
<dbReference type="CD-CODE" id="4299E36E">
    <property type="entry name" value="Nucleolus"/>
</dbReference>
<dbReference type="EvolutionaryTrace" id="Q94K71"/>
<dbReference type="PRO" id="PR:Q94K71"/>
<dbReference type="Proteomes" id="UP000006548">
    <property type="component" value="Chromosome 3"/>
</dbReference>
<dbReference type="ExpressionAtlas" id="Q94K71">
    <property type="expression patterns" value="baseline and differential"/>
</dbReference>
<dbReference type="GO" id="GO:0009507">
    <property type="term" value="C:chloroplast"/>
    <property type="evidence" value="ECO:0007005"/>
    <property type="project" value="TAIR"/>
</dbReference>
<dbReference type="GO" id="GO:0009941">
    <property type="term" value="C:chloroplast envelope"/>
    <property type="evidence" value="ECO:0007005"/>
    <property type="project" value="TAIR"/>
</dbReference>
<dbReference type="GO" id="GO:0009570">
    <property type="term" value="C:chloroplast stroma"/>
    <property type="evidence" value="ECO:0007005"/>
    <property type="project" value="TAIR"/>
</dbReference>
<dbReference type="GO" id="GO:0005829">
    <property type="term" value="C:cytosol"/>
    <property type="evidence" value="ECO:0007005"/>
    <property type="project" value="TAIR"/>
</dbReference>
<dbReference type="GO" id="GO:0016787">
    <property type="term" value="F:hydrolase activity"/>
    <property type="evidence" value="ECO:0007669"/>
    <property type="project" value="UniProtKB-KW"/>
</dbReference>
<dbReference type="GO" id="GO:0046872">
    <property type="term" value="F:metal ion binding"/>
    <property type="evidence" value="ECO:0007669"/>
    <property type="project" value="UniProtKB-KW"/>
</dbReference>
<dbReference type="CDD" id="cd07528">
    <property type="entry name" value="HAD_CbbY-like"/>
    <property type="match status" value="1"/>
</dbReference>
<dbReference type="FunFam" id="1.10.150.240:FF:000045">
    <property type="entry name" value="CBBY-like protein"/>
    <property type="match status" value="1"/>
</dbReference>
<dbReference type="FunFam" id="3.40.50.1000:FF:000036">
    <property type="entry name" value="HAD family hydrolase"/>
    <property type="match status" value="1"/>
</dbReference>
<dbReference type="Gene3D" id="3.40.50.1000">
    <property type="entry name" value="HAD superfamily/HAD-like"/>
    <property type="match status" value="1"/>
</dbReference>
<dbReference type="Gene3D" id="1.10.150.240">
    <property type="entry name" value="Putative phosphatase, domain 2"/>
    <property type="match status" value="1"/>
</dbReference>
<dbReference type="InterPro" id="IPR044999">
    <property type="entry name" value="CbbY-like"/>
</dbReference>
<dbReference type="InterPro" id="IPR036412">
    <property type="entry name" value="HAD-like_sf"/>
</dbReference>
<dbReference type="InterPro" id="IPR006439">
    <property type="entry name" value="HAD-SF_hydro_IA"/>
</dbReference>
<dbReference type="InterPro" id="IPR023214">
    <property type="entry name" value="HAD_sf"/>
</dbReference>
<dbReference type="InterPro" id="IPR023198">
    <property type="entry name" value="PGP-like_dom2"/>
</dbReference>
<dbReference type="NCBIfam" id="TIGR01509">
    <property type="entry name" value="HAD-SF-IA-v3"/>
    <property type="match status" value="1"/>
</dbReference>
<dbReference type="PANTHER" id="PTHR42896:SF2">
    <property type="entry name" value="CBBY-LIKE PROTEIN"/>
    <property type="match status" value="1"/>
</dbReference>
<dbReference type="PANTHER" id="PTHR42896">
    <property type="entry name" value="XYLULOSE-1,5-BISPHOSPHATE (XUBP) PHOSPHATASE"/>
    <property type="match status" value="1"/>
</dbReference>
<dbReference type="Pfam" id="PF00702">
    <property type="entry name" value="Hydrolase"/>
    <property type="match status" value="1"/>
</dbReference>
<dbReference type="SFLD" id="SFLDS00003">
    <property type="entry name" value="Haloacid_Dehalogenase"/>
    <property type="match status" value="1"/>
</dbReference>
<dbReference type="SFLD" id="SFLDF00035">
    <property type="entry name" value="phosphoglycolate_phosphatase"/>
    <property type="match status" value="1"/>
</dbReference>
<dbReference type="SUPFAM" id="SSF56784">
    <property type="entry name" value="HAD-like"/>
    <property type="match status" value="1"/>
</dbReference>
<reference key="1">
    <citation type="journal article" date="2000" name="Nature">
        <title>Sequence and analysis of chromosome 3 of the plant Arabidopsis thaliana.</title>
        <authorList>
            <person name="Salanoubat M."/>
            <person name="Lemcke K."/>
            <person name="Rieger M."/>
            <person name="Ansorge W."/>
            <person name="Unseld M."/>
            <person name="Fartmann B."/>
            <person name="Valle G."/>
            <person name="Bloecker H."/>
            <person name="Perez-Alonso M."/>
            <person name="Obermaier B."/>
            <person name="Delseny M."/>
            <person name="Boutry M."/>
            <person name="Grivell L.A."/>
            <person name="Mache R."/>
            <person name="Puigdomenech P."/>
            <person name="De Simone V."/>
            <person name="Choisne N."/>
            <person name="Artiguenave F."/>
            <person name="Robert C."/>
            <person name="Brottier P."/>
            <person name="Wincker P."/>
            <person name="Cattolico L."/>
            <person name="Weissenbach J."/>
            <person name="Saurin W."/>
            <person name="Quetier F."/>
            <person name="Schaefer M."/>
            <person name="Mueller-Auer S."/>
            <person name="Gabel C."/>
            <person name="Fuchs M."/>
            <person name="Benes V."/>
            <person name="Wurmbach E."/>
            <person name="Drzonek H."/>
            <person name="Erfle H."/>
            <person name="Jordan N."/>
            <person name="Bangert S."/>
            <person name="Wiedelmann R."/>
            <person name="Kranz H."/>
            <person name="Voss H."/>
            <person name="Holland R."/>
            <person name="Brandt P."/>
            <person name="Nyakatura G."/>
            <person name="Vezzi A."/>
            <person name="D'Angelo M."/>
            <person name="Pallavicini A."/>
            <person name="Toppo S."/>
            <person name="Simionati B."/>
            <person name="Conrad A."/>
            <person name="Hornischer K."/>
            <person name="Kauer G."/>
            <person name="Loehnert T.-H."/>
            <person name="Nordsiek G."/>
            <person name="Reichelt J."/>
            <person name="Scharfe M."/>
            <person name="Schoen O."/>
            <person name="Bargues M."/>
            <person name="Terol J."/>
            <person name="Climent J."/>
            <person name="Navarro P."/>
            <person name="Collado C."/>
            <person name="Perez-Perez A."/>
            <person name="Ottenwaelder B."/>
            <person name="Duchemin D."/>
            <person name="Cooke R."/>
            <person name="Laudie M."/>
            <person name="Berger-Llauro C."/>
            <person name="Purnelle B."/>
            <person name="Masuy D."/>
            <person name="de Haan M."/>
            <person name="Maarse A.C."/>
            <person name="Alcaraz J.-P."/>
            <person name="Cottet A."/>
            <person name="Casacuberta E."/>
            <person name="Monfort A."/>
            <person name="Argiriou A."/>
            <person name="Flores M."/>
            <person name="Liguori R."/>
            <person name="Vitale D."/>
            <person name="Mannhaupt G."/>
            <person name="Haase D."/>
            <person name="Schoof H."/>
            <person name="Rudd S."/>
            <person name="Zaccaria P."/>
            <person name="Mewes H.-W."/>
            <person name="Mayer K.F.X."/>
            <person name="Kaul S."/>
            <person name="Town C.D."/>
            <person name="Koo H.L."/>
            <person name="Tallon L.J."/>
            <person name="Jenkins J."/>
            <person name="Rooney T."/>
            <person name="Rizzo M."/>
            <person name="Walts A."/>
            <person name="Utterback T."/>
            <person name="Fujii C.Y."/>
            <person name="Shea T.P."/>
            <person name="Creasy T.H."/>
            <person name="Haas B."/>
            <person name="Maiti R."/>
            <person name="Wu D."/>
            <person name="Peterson J."/>
            <person name="Van Aken S."/>
            <person name="Pai G."/>
            <person name="Militscher J."/>
            <person name="Sellers P."/>
            <person name="Gill J.E."/>
            <person name="Feldblyum T.V."/>
            <person name="Preuss D."/>
            <person name="Lin X."/>
            <person name="Nierman W.C."/>
            <person name="Salzberg S.L."/>
            <person name="White O."/>
            <person name="Venter J.C."/>
            <person name="Fraser C.M."/>
            <person name="Kaneko T."/>
            <person name="Nakamura Y."/>
            <person name="Sato S."/>
            <person name="Kato T."/>
            <person name="Asamizu E."/>
            <person name="Sasamoto S."/>
            <person name="Kimura T."/>
            <person name="Idesawa K."/>
            <person name="Kawashima K."/>
            <person name="Kishida Y."/>
            <person name="Kiyokawa C."/>
            <person name="Kohara M."/>
            <person name="Matsumoto M."/>
            <person name="Matsuno A."/>
            <person name="Muraki A."/>
            <person name="Nakayama S."/>
            <person name="Nakazaki N."/>
            <person name="Shinpo S."/>
            <person name="Takeuchi C."/>
            <person name="Wada T."/>
            <person name="Watanabe A."/>
            <person name="Yamada M."/>
            <person name="Yasuda M."/>
            <person name="Tabata S."/>
        </authorList>
    </citation>
    <scope>NUCLEOTIDE SEQUENCE [LARGE SCALE GENOMIC DNA]</scope>
    <source>
        <strain>cv. Columbia</strain>
    </source>
</reference>
<reference key="2">
    <citation type="journal article" date="2017" name="Plant J.">
        <title>Araport11: a complete reannotation of the Arabidopsis thaliana reference genome.</title>
        <authorList>
            <person name="Cheng C.Y."/>
            <person name="Krishnakumar V."/>
            <person name="Chan A.P."/>
            <person name="Thibaud-Nissen F."/>
            <person name="Schobel S."/>
            <person name="Town C.D."/>
        </authorList>
    </citation>
    <scope>GENOME REANNOTATION</scope>
    <source>
        <strain>cv. Columbia</strain>
    </source>
</reference>
<reference key="3">
    <citation type="journal article" date="2002" name="Science">
        <title>Functional annotation of a full-length Arabidopsis cDNA collection.</title>
        <authorList>
            <person name="Seki M."/>
            <person name="Narusaka M."/>
            <person name="Kamiya A."/>
            <person name="Ishida J."/>
            <person name="Satou M."/>
            <person name="Sakurai T."/>
            <person name="Nakajima M."/>
            <person name="Enju A."/>
            <person name="Akiyama K."/>
            <person name="Oono Y."/>
            <person name="Muramatsu M."/>
            <person name="Hayashizaki Y."/>
            <person name="Kawai J."/>
            <person name="Carninci P."/>
            <person name="Itoh M."/>
            <person name="Ishii Y."/>
            <person name="Arakawa T."/>
            <person name="Shibata K."/>
            <person name="Shinagawa A."/>
            <person name="Shinozaki K."/>
        </authorList>
    </citation>
    <scope>NUCLEOTIDE SEQUENCE [LARGE SCALE MRNA]</scope>
    <source>
        <strain>cv. Columbia</strain>
    </source>
</reference>
<reference key="4">
    <citation type="journal article" date="2003" name="Science">
        <title>Empirical analysis of transcriptional activity in the Arabidopsis genome.</title>
        <authorList>
            <person name="Yamada K."/>
            <person name="Lim J."/>
            <person name="Dale J.M."/>
            <person name="Chen H."/>
            <person name="Shinn P."/>
            <person name="Palm C.J."/>
            <person name="Southwick A.M."/>
            <person name="Wu H.C."/>
            <person name="Kim C.J."/>
            <person name="Nguyen M."/>
            <person name="Pham P.K."/>
            <person name="Cheuk R.F."/>
            <person name="Karlin-Newmann G."/>
            <person name="Liu S.X."/>
            <person name="Lam B."/>
            <person name="Sakano H."/>
            <person name="Wu T."/>
            <person name="Yu G."/>
            <person name="Miranda M."/>
            <person name="Quach H.L."/>
            <person name="Tripp M."/>
            <person name="Chang C.H."/>
            <person name="Lee J.M."/>
            <person name="Toriumi M.J."/>
            <person name="Chan M.M."/>
            <person name="Tang C.C."/>
            <person name="Onodera C.S."/>
            <person name="Deng J.M."/>
            <person name="Akiyama K."/>
            <person name="Ansari Y."/>
            <person name="Arakawa T."/>
            <person name="Banh J."/>
            <person name="Banno F."/>
            <person name="Bowser L."/>
            <person name="Brooks S.Y."/>
            <person name="Carninci P."/>
            <person name="Chao Q."/>
            <person name="Choy N."/>
            <person name="Enju A."/>
            <person name="Goldsmith A.D."/>
            <person name="Gurjal M."/>
            <person name="Hansen N.F."/>
            <person name="Hayashizaki Y."/>
            <person name="Johnson-Hopson C."/>
            <person name="Hsuan V.W."/>
            <person name="Iida K."/>
            <person name="Karnes M."/>
            <person name="Khan S."/>
            <person name="Koesema E."/>
            <person name="Ishida J."/>
            <person name="Jiang P.X."/>
            <person name="Jones T."/>
            <person name="Kawai J."/>
            <person name="Kamiya A."/>
            <person name="Meyers C."/>
            <person name="Nakajima M."/>
            <person name="Narusaka M."/>
            <person name="Seki M."/>
            <person name="Sakurai T."/>
            <person name="Satou M."/>
            <person name="Tamse R."/>
            <person name="Vaysberg M."/>
            <person name="Wallender E.K."/>
            <person name="Wong C."/>
            <person name="Yamamura Y."/>
            <person name="Yuan S."/>
            <person name="Shinozaki K."/>
            <person name="Davis R.W."/>
            <person name="Theologis A."/>
            <person name="Ecker J.R."/>
        </authorList>
    </citation>
    <scope>NUCLEOTIDE SEQUENCE [LARGE SCALE MRNA]</scope>
    <source>
        <strain>cv. Columbia</strain>
    </source>
</reference>
<reference key="5">
    <citation type="submission" date="2004-09" db="EMBL/GenBank/DDBJ databases">
        <title>Large-scale analysis of RIKEN Arabidopsis full-length (RAFL) cDNAs.</title>
        <authorList>
            <person name="Totoki Y."/>
            <person name="Seki M."/>
            <person name="Ishida J."/>
            <person name="Nakajima M."/>
            <person name="Enju A."/>
            <person name="Kamiya A."/>
            <person name="Narusaka M."/>
            <person name="Shin-i T."/>
            <person name="Nakagawa M."/>
            <person name="Sakamoto N."/>
            <person name="Oishi K."/>
            <person name="Kohara Y."/>
            <person name="Kobayashi M."/>
            <person name="Toyoda A."/>
            <person name="Sakaki Y."/>
            <person name="Sakurai T."/>
            <person name="Iida K."/>
            <person name="Akiyama K."/>
            <person name="Satou M."/>
            <person name="Toyoda T."/>
            <person name="Konagaya A."/>
            <person name="Carninci P."/>
            <person name="Kawai J."/>
            <person name="Hayashizaki Y."/>
            <person name="Shinozaki K."/>
        </authorList>
    </citation>
    <scope>NUCLEOTIDE SEQUENCE [LARGE SCALE MRNA]</scope>
    <source>
        <strain>cv. Columbia</strain>
    </source>
</reference>
<reference key="6">
    <citation type="submission" date="2002-03" db="EMBL/GenBank/DDBJ databases">
        <title>Full-length cDNA from Arabidopsis thaliana.</title>
        <authorList>
            <person name="Brover V.V."/>
            <person name="Troukhan M.E."/>
            <person name="Alexandrov N.A."/>
            <person name="Lu Y.-P."/>
            <person name="Flavell R.B."/>
            <person name="Feldmann K.A."/>
        </authorList>
    </citation>
    <scope>NUCLEOTIDE SEQUENCE [LARGE SCALE MRNA]</scope>
    <source>
        <strain>cv. Columbia</strain>
    </source>
</reference>
<reference evidence="9" key="7">
    <citation type="journal article" date="2015" name="Nat. Plants">
        <title>Degradation of potent Rubisco inhibitor by selective sugar phosphatase.</title>
        <authorList>
            <person name="Bracher A."/>
            <person name="Sharma A."/>
            <person name="Starling-Windhof A."/>
            <person name="Hartl F.U."/>
            <person name="Hayer-Hartl M."/>
        </authorList>
    </citation>
    <scope>X-RAY CRYSTALLOGRAPHY (1.30 ANGSTROMS) OF 74-319 IN COMPLEX WITH MAGNESIUM</scope>
    <scope>CATALYTIC ACTIVITY</scope>
    <scope>COFACTOR</scope>
    <scope>FUNCTION</scope>
    <scope>SUBSTRATE SPECIFICITY</scope>
    <scope>BIOPHYSICOCHEMICAL PROPERTIES</scope>
    <scope>MUTAGENESIS OF ASP-84; GLU-91; HIS-95; TYR-117; ARG-129 AND LYS-161</scope>
</reference>
<proteinExistence type="evidence at protein level"/>
<protein>
    <recommendedName>
        <fullName evidence="4">CBBY-like protein</fullName>
        <shortName evidence="4">AtCbby</shortName>
        <ecNumber evidence="3">3.1.3.-</ecNumber>
    </recommendedName>
</protein>
<gene>
    <name evidence="4" type="primary">CBBY</name>
    <name evidence="7" type="ordered locus">At3g48420</name>
    <name evidence="8" type="ORF">T29H11.60</name>
</gene>
<name>CBBY_ARATH</name>
<sequence>MATVKISLSLASLSPSSSSSSIQSKLSPSFIPNAAPAKAVKLRFNGKSLRAKPMVYRSSRSVGVTCSASSSLTTLPSALLFDCDGVLVDTEKDGHRISFNDTFKERDLNVTWDVDLYGELLKIGGGKERMTAYFNKVGWPEKAPKDEAERKEFIAGLHKQKTELFMVLIEKKLLPLRPGVAKLVDQALTNGVKVAVCSTSNEKAVSAIVSCLLGPERAEKIKIFAGDVVPKKKPDPAIYNLAAETLGVDPSKCVVVEDSAIGLAAAKAAGMTCIVTKSGYTADEDFENADAVFDCIGDPPEERFDLAFCGSLLRKQFVS</sequence>